<evidence type="ECO:0000255" key="1"/>
<evidence type="ECO:0000256" key="2">
    <source>
        <dbReference type="SAM" id="MobiDB-lite"/>
    </source>
</evidence>
<evidence type="ECO:0000269" key="3">
    <source>
    </source>
</evidence>
<evidence type="ECO:0000269" key="4">
    <source>
    </source>
</evidence>
<evidence type="ECO:0000269" key="5">
    <source>
    </source>
</evidence>
<evidence type="ECO:0000305" key="6"/>
<evidence type="ECO:0000312" key="7">
    <source>
        <dbReference type="EMBL" id="AAL39494.1"/>
    </source>
</evidence>
<sequence length="391" mass="42810">MQGLFRDPALERHFTGHSGGITQLRFGPDGAQIATSSTDSTVILWNLNQAARCIRFASHSAPVNGVAWSPKGNLVASAGHDRTVKIWEPKLRGVSGEFVAHSKAVRSVDFDSTGHLMLTASDDKSAKIWRVARRQFVSSFAQQNNWVRSAKFSPNGKLVATASDDKSVRIYDVDSGECVRTFTEERAAPRQLAWHPWGNMLAVALGCNRIKIFDVSGSQLLQLYVVHSAPVNDVAFHPSGHFLLSGSDDRTIRILDLLEGRPIYTLTGHTDAVNAVAFSRDGDKFATGGSDRQLLVWQSNLHTYDASQFEAKSALASSSCESSGVSSKQSEGSSTSKSNDLSIRIDPRQSLAYQLSEENFQVLDSKHSTQPEKVLGHGMDFKQHSSSPRFF</sequence>
<feature type="chain" id="PRO_0000395868" description="POC1 centriolar protein homolog">
    <location>
        <begin position="1"/>
        <end position="391"/>
    </location>
</feature>
<feature type="repeat" description="WD 1" evidence="1">
    <location>
        <begin position="16"/>
        <end position="55"/>
    </location>
</feature>
<feature type="repeat" description="WD 2" evidence="1">
    <location>
        <begin position="58"/>
        <end position="97"/>
    </location>
</feature>
<feature type="repeat" description="WD 3" evidence="1">
    <location>
        <begin position="100"/>
        <end position="139"/>
    </location>
</feature>
<feature type="repeat" description="WD 4" evidence="1">
    <location>
        <begin position="142"/>
        <end position="183"/>
    </location>
</feature>
<feature type="repeat" description="WD 5" evidence="1">
    <location>
        <begin position="185"/>
        <end position="223"/>
    </location>
</feature>
<feature type="repeat" description="WD 6" evidence="1">
    <location>
        <begin position="226"/>
        <end position="265"/>
    </location>
</feature>
<feature type="repeat" description="WD 7" evidence="1">
    <location>
        <begin position="268"/>
        <end position="307"/>
    </location>
</feature>
<feature type="region of interest" description="Disordered" evidence="2">
    <location>
        <begin position="321"/>
        <end position="341"/>
    </location>
</feature>
<feature type="region of interest" description="Disordered" evidence="2">
    <location>
        <begin position="363"/>
        <end position="391"/>
    </location>
</feature>
<feature type="compositionally biased region" description="Low complexity" evidence="2">
    <location>
        <begin position="321"/>
        <end position="338"/>
    </location>
</feature>
<name>POC1_DROME</name>
<gene>
    <name type="primary">Poc1</name>
    <name type="ORF">CG10191</name>
</gene>
<keyword id="KW-1185">Reference proteome</keyword>
<keyword id="KW-0677">Repeat</keyword>
<keyword id="KW-0853">WD repeat</keyword>
<dbReference type="EMBL" id="AE014296">
    <property type="protein sequence ID" value="AAF49825.1"/>
    <property type="molecule type" value="Genomic_DNA"/>
</dbReference>
<dbReference type="EMBL" id="AY069349">
    <property type="protein sequence ID" value="AAL39494.1"/>
    <property type="molecule type" value="mRNA"/>
</dbReference>
<dbReference type="RefSeq" id="NP_648640.1">
    <property type="nucleotide sequence ID" value="NM_140383.2"/>
</dbReference>
<dbReference type="SMR" id="Q9VU65"/>
<dbReference type="FunCoup" id="Q9VU65">
    <property type="interactions" value="36"/>
</dbReference>
<dbReference type="IntAct" id="Q9VU65">
    <property type="interactions" value="4"/>
</dbReference>
<dbReference type="STRING" id="7227.FBpp0302861"/>
<dbReference type="PaxDb" id="7227-FBpp0302861"/>
<dbReference type="DNASU" id="39502"/>
<dbReference type="EnsemblMetazoa" id="FBtr0075863">
    <property type="protein sequence ID" value="FBpp0075597"/>
    <property type="gene ID" value="FBgn0036354"/>
</dbReference>
<dbReference type="GeneID" id="39502"/>
<dbReference type="KEGG" id="dme:Dmel_CG10191"/>
<dbReference type="UCSC" id="CG10191-RA">
    <property type="organism name" value="d. melanogaster"/>
</dbReference>
<dbReference type="AGR" id="FB:FBgn0036354"/>
<dbReference type="CTD" id="39502"/>
<dbReference type="FlyBase" id="FBgn0036354">
    <property type="gene designation" value="Poc1"/>
</dbReference>
<dbReference type="VEuPathDB" id="VectorBase:FBgn0036354"/>
<dbReference type="eggNOG" id="ENOG502QSVJ">
    <property type="taxonomic scope" value="Eukaryota"/>
</dbReference>
<dbReference type="GeneTree" id="ENSGT00940000157494"/>
<dbReference type="HOGENOM" id="CLU_000288_57_17_1"/>
<dbReference type="InParanoid" id="Q9VU65"/>
<dbReference type="OrthoDB" id="10264588at2759"/>
<dbReference type="PhylomeDB" id="Q9VU65"/>
<dbReference type="BioGRID-ORCS" id="39502">
    <property type="hits" value="0 hits in 3 CRISPR screens"/>
</dbReference>
<dbReference type="GenomeRNAi" id="39502"/>
<dbReference type="PRO" id="PR:Q9VU65"/>
<dbReference type="Proteomes" id="UP000000803">
    <property type="component" value="Chromosome 3L"/>
</dbReference>
<dbReference type="Bgee" id="FBgn0036354">
    <property type="expression patterns" value="Expressed in early elongation stage spermatid (Drosophila) in testis and 57 other cell types or tissues"/>
</dbReference>
<dbReference type="ExpressionAtlas" id="Q9VU65">
    <property type="expression patterns" value="baseline and differential"/>
</dbReference>
<dbReference type="GO" id="GO:0005814">
    <property type="term" value="C:centriole"/>
    <property type="evidence" value="ECO:0000318"/>
    <property type="project" value="GO_Central"/>
</dbReference>
<dbReference type="GO" id="GO:0036064">
    <property type="term" value="C:ciliary basal body"/>
    <property type="evidence" value="ECO:0000318"/>
    <property type="project" value="GO_Central"/>
</dbReference>
<dbReference type="GO" id="GO:0007098">
    <property type="term" value="P:centrosome cycle"/>
    <property type="evidence" value="ECO:0000315"/>
    <property type="project" value="FlyBase"/>
</dbReference>
<dbReference type="GO" id="GO:0060271">
    <property type="term" value="P:cilium assembly"/>
    <property type="evidence" value="ECO:0000318"/>
    <property type="project" value="GO_Central"/>
</dbReference>
<dbReference type="CDD" id="cd00200">
    <property type="entry name" value="WD40"/>
    <property type="match status" value="1"/>
</dbReference>
<dbReference type="FunFam" id="2.130.10.10:FF:002445">
    <property type="entry name" value="POC1 centriolar protein homolog"/>
    <property type="match status" value="1"/>
</dbReference>
<dbReference type="Gene3D" id="2.130.10.10">
    <property type="entry name" value="YVTN repeat-like/Quinoprotein amine dehydrogenase"/>
    <property type="match status" value="3"/>
</dbReference>
<dbReference type="InterPro" id="IPR020472">
    <property type="entry name" value="G-protein_beta_WD-40_rep"/>
</dbReference>
<dbReference type="InterPro" id="IPR015943">
    <property type="entry name" value="WD40/YVTN_repeat-like_dom_sf"/>
</dbReference>
<dbReference type="InterPro" id="IPR019775">
    <property type="entry name" value="WD40_repeat_CS"/>
</dbReference>
<dbReference type="InterPro" id="IPR036322">
    <property type="entry name" value="WD40_repeat_dom_sf"/>
</dbReference>
<dbReference type="InterPro" id="IPR001680">
    <property type="entry name" value="WD40_rpt"/>
</dbReference>
<dbReference type="InterPro" id="IPR050505">
    <property type="entry name" value="WDR55_POC1"/>
</dbReference>
<dbReference type="PANTHER" id="PTHR44019:SF8">
    <property type="entry name" value="POC1 CENTRIOLAR PROTEIN HOMOLOG"/>
    <property type="match status" value="1"/>
</dbReference>
<dbReference type="PANTHER" id="PTHR44019">
    <property type="entry name" value="WD REPEAT-CONTAINING PROTEIN 55"/>
    <property type="match status" value="1"/>
</dbReference>
<dbReference type="Pfam" id="PF00400">
    <property type="entry name" value="WD40"/>
    <property type="match status" value="7"/>
</dbReference>
<dbReference type="PRINTS" id="PR00320">
    <property type="entry name" value="GPROTEINBRPT"/>
</dbReference>
<dbReference type="SMART" id="SM00320">
    <property type="entry name" value="WD40"/>
    <property type="match status" value="7"/>
</dbReference>
<dbReference type="SUPFAM" id="SSF50978">
    <property type="entry name" value="WD40 repeat-like"/>
    <property type="match status" value="1"/>
</dbReference>
<dbReference type="PROSITE" id="PS00678">
    <property type="entry name" value="WD_REPEATS_1"/>
    <property type="match status" value="1"/>
</dbReference>
<dbReference type="PROSITE" id="PS50082">
    <property type="entry name" value="WD_REPEATS_2"/>
    <property type="match status" value="6"/>
</dbReference>
<dbReference type="PROSITE" id="PS50294">
    <property type="entry name" value="WD_REPEATS_REGION"/>
    <property type="match status" value="1"/>
</dbReference>
<organism>
    <name type="scientific">Drosophila melanogaster</name>
    <name type="common">Fruit fly</name>
    <dbReference type="NCBI Taxonomy" id="7227"/>
    <lineage>
        <taxon>Eukaryota</taxon>
        <taxon>Metazoa</taxon>
        <taxon>Ecdysozoa</taxon>
        <taxon>Arthropoda</taxon>
        <taxon>Hexapoda</taxon>
        <taxon>Insecta</taxon>
        <taxon>Pterygota</taxon>
        <taxon>Neoptera</taxon>
        <taxon>Endopterygota</taxon>
        <taxon>Diptera</taxon>
        <taxon>Brachycera</taxon>
        <taxon>Muscomorpha</taxon>
        <taxon>Ephydroidea</taxon>
        <taxon>Drosophilidae</taxon>
        <taxon>Drosophila</taxon>
        <taxon>Sophophora</taxon>
    </lineage>
</organism>
<comment type="function">
    <text evidence="5">Plays an important role in centriole formation.</text>
</comment>
<comment type="similarity">
    <text evidence="6">Belongs to the WD repeat POC1 family.</text>
</comment>
<proteinExistence type="evidence at transcript level"/>
<reference key="1">
    <citation type="journal article" date="2000" name="Science">
        <title>The genome sequence of Drosophila melanogaster.</title>
        <authorList>
            <person name="Adams M.D."/>
            <person name="Celniker S.E."/>
            <person name="Holt R.A."/>
            <person name="Evans C.A."/>
            <person name="Gocayne J.D."/>
            <person name="Amanatides P.G."/>
            <person name="Scherer S.E."/>
            <person name="Li P.W."/>
            <person name="Hoskins R.A."/>
            <person name="Galle R.F."/>
            <person name="George R.A."/>
            <person name="Lewis S.E."/>
            <person name="Richards S."/>
            <person name="Ashburner M."/>
            <person name="Henderson S.N."/>
            <person name="Sutton G.G."/>
            <person name="Wortman J.R."/>
            <person name="Yandell M.D."/>
            <person name="Zhang Q."/>
            <person name="Chen L.X."/>
            <person name="Brandon R.C."/>
            <person name="Rogers Y.-H.C."/>
            <person name="Blazej R.G."/>
            <person name="Champe M."/>
            <person name="Pfeiffer B.D."/>
            <person name="Wan K.H."/>
            <person name="Doyle C."/>
            <person name="Baxter E.G."/>
            <person name="Helt G."/>
            <person name="Nelson C.R."/>
            <person name="Miklos G.L.G."/>
            <person name="Abril J.F."/>
            <person name="Agbayani A."/>
            <person name="An H.-J."/>
            <person name="Andrews-Pfannkoch C."/>
            <person name="Baldwin D."/>
            <person name="Ballew R.M."/>
            <person name="Basu A."/>
            <person name="Baxendale J."/>
            <person name="Bayraktaroglu L."/>
            <person name="Beasley E.M."/>
            <person name="Beeson K.Y."/>
            <person name="Benos P.V."/>
            <person name="Berman B.P."/>
            <person name="Bhandari D."/>
            <person name="Bolshakov S."/>
            <person name="Borkova D."/>
            <person name="Botchan M.R."/>
            <person name="Bouck J."/>
            <person name="Brokstein P."/>
            <person name="Brottier P."/>
            <person name="Burtis K.C."/>
            <person name="Busam D.A."/>
            <person name="Butler H."/>
            <person name="Cadieu E."/>
            <person name="Center A."/>
            <person name="Chandra I."/>
            <person name="Cherry J.M."/>
            <person name="Cawley S."/>
            <person name="Dahlke C."/>
            <person name="Davenport L.B."/>
            <person name="Davies P."/>
            <person name="de Pablos B."/>
            <person name="Delcher A."/>
            <person name="Deng Z."/>
            <person name="Mays A.D."/>
            <person name="Dew I."/>
            <person name="Dietz S.M."/>
            <person name="Dodson K."/>
            <person name="Doup L.E."/>
            <person name="Downes M."/>
            <person name="Dugan-Rocha S."/>
            <person name="Dunkov B.C."/>
            <person name="Dunn P."/>
            <person name="Durbin K.J."/>
            <person name="Evangelista C.C."/>
            <person name="Ferraz C."/>
            <person name="Ferriera S."/>
            <person name="Fleischmann W."/>
            <person name="Fosler C."/>
            <person name="Gabrielian A.E."/>
            <person name="Garg N.S."/>
            <person name="Gelbart W.M."/>
            <person name="Glasser K."/>
            <person name="Glodek A."/>
            <person name="Gong F."/>
            <person name="Gorrell J.H."/>
            <person name="Gu Z."/>
            <person name="Guan P."/>
            <person name="Harris M."/>
            <person name="Harris N.L."/>
            <person name="Harvey D.A."/>
            <person name="Heiman T.J."/>
            <person name="Hernandez J.R."/>
            <person name="Houck J."/>
            <person name="Hostin D."/>
            <person name="Houston K.A."/>
            <person name="Howland T.J."/>
            <person name="Wei M.-H."/>
            <person name="Ibegwam C."/>
            <person name="Jalali M."/>
            <person name="Kalush F."/>
            <person name="Karpen G.H."/>
            <person name="Ke Z."/>
            <person name="Kennison J.A."/>
            <person name="Ketchum K.A."/>
            <person name="Kimmel B.E."/>
            <person name="Kodira C.D."/>
            <person name="Kraft C.L."/>
            <person name="Kravitz S."/>
            <person name="Kulp D."/>
            <person name="Lai Z."/>
            <person name="Lasko P."/>
            <person name="Lei Y."/>
            <person name="Levitsky A.A."/>
            <person name="Li J.H."/>
            <person name="Li Z."/>
            <person name="Liang Y."/>
            <person name="Lin X."/>
            <person name="Liu X."/>
            <person name="Mattei B."/>
            <person name="McIntosh T.C."/>
            <person name="McLeod M.P."/>
            <person name="McPherson D."/>
            <person name="Merkulov G."/>
            <person name="Milshina N.V."/>
            <person name="Mobarry C."/>
            <person name="Morris J."/>
            <person name="Moshrefi A."/>
            <person name="Mount S.M."/>
            <person name="Moy M."/>
            <person name="Murphy B."/>
            <person name="Murphy L."/>
            <person name="Muzny D.M."/>
            <person name="Nelson D.L."/>
            <person name="Nelson D.R."/>
            <person name="Nelson K.A."/>
            <person name="Nixon K."/>
            <person name="Nusskern D.R."/>
            <person name="Pacleb J.M."/>
            <person name="Palazzolo M."/>
            <person name="Pittman G.S."/>
            <person name="Pan S."/>
            <person name="Pollard J."/>
            <person name="Puri V."/>
            <person name="Reese M.G."/>
            <person name="Reinert K."/>
            <person name="Remington K."/>
            <person name="Saunders R.D.C."/>
            <person name="Scheeler F."/>
            <person name="Shen H."/>
            <person name="Shue B.C."/>
            <person name="Siden-Kiamos I."/>
            <person name="Simpson M."/>
            <person name="Skupski M.P."/>
            <person name="Smith T.J."/>
            <person name="Spier E."/>
            <person name="Spradling A.C."/>
            <person name="Stapleton M."/>
            <person name="Strong R."/>
            <person name="Sun E."/>
            <person name="Svirskas R."/>
            <person name="Tector C."/>
            <person name="Turner R."/>
            <person name="Venter E."/>
            <person name="Wang A.H."/>
            <person name="Wang X."/>
            <person name="Wang Z.-Y."/>
            <person name="Wassarman D.A."/>
            <person name="Weinstock G.M."/>
            <person name="Weissenbach J."/>
            <person name="Williams S.M."/>
            <person name="Woodage T."/>
            <person name="Worley K.C."/>
            <person name="Wu D."/>
            <person name="Yang S."/>
            <person name="Yao Q.A."/>
            <person name="Ye J."/>
            <person name="Yeh R.-F."/>
            <person name="Zaveri J.S."/>
            <person name="Zhan M."/>
            <person name="Zhang G."/>
            <person name="Zhao Q."/>
            <person name="Zheng L."/>
            <person name="Zheng X.H."/>
            <person name="Zhong F.N."/>
            <person name="Zhong W."/>
            <person name="Zhou X."/>
            <person name="Zhu S.C."/>
            <person name="Zhu X."/>
            <person name="Smith H.O."/>
            <person name="Gibbs R.A."/>
            <person name="Myers E.W."/>
            <person name="Rubin G.M."/>
            <person name="Venter J.C."/>
        </authorList>
    </citation>
    <scope>NUCLEOTIDE SEQUENCE [LARGE SCALE GENOMIC DNA]</scope>
    <source>
        <strain evidence="3">Berkeley</strain>
    </source>
</reference>
<reference evidence="6" key="2">
    <citation type="journal article" date="2002" name="Genome Biol.">
        <title>Annotation of the Drosophila melanogaster euchromatic genome: a systematic review.</title>
        <authorList>
            <person name="Misra S."/>
            <person name="Crosby M.A."/>
            <person name="Mungall C.J."/>
            <person name="Matthews B.B."/>
            <person name="Campbell K.S."/>
            <person name="Hradecky P."/>
            <person name="Huang Y."/>
            <person name="Kaminker J.S."/>
            <person name="Millburn G.H."/>
            <person name="Prochnik S.E."/>
            <person name="Smith C.D."/>
            <person name="Tupy J.L."/>
            <person name="Whitfield E.J."/>
            <person name="Bayraktaroglu L."/>
            <person name="Berman B.P."/>
            <person name="Bettencourt B.R."/>
            <person name="Celniker S.E."/>
            <person name="de Grey A.D.N.J."/>
            <person name="Drysdale R.A."/>
            <person name="Harris N.L."/>
            <person name="Richter J."/>
            <person name="Russo S."/>
            <person name="Schroeder A.J."/>
            <person name="Shu S.Q."/>
            <person name="Stapleton M."/>
            <person name="Yamada C."/>
            <person name="Ashburner M."/>
            <person name="Gelbart W.M."/>
            <person name="Rubin G.M."/>
            <person name="Lewis S.E."/>
        </authorList>
    </citation>
    <scope>GENOME REANNOTATION</scope>
    <source>
        <strain>Berkeley</strain>
    </source>
</reference>
<reference evidence="6 7" key="3">
    <citation type="journal article" date="2002" name="Genome Biol.">
        <title>A Drosophila full-length cDNA resource.</title>
        <authorList>
            <person name="Stapleton M."/>
            <person name="Carlson J.W."/>
            <person name="Brokstein P."/>
            <person name="Yu C."/>
            <person name="Champe M."/>
            <person name="George R.A."/>
            <person name="Guarin H."/>
            <person name="Kronmiller B."/>
            <person name="Pacleb J.M."/>
            <person name="Park S."/>
            <person name="Wan K.H."/>
            <person name="Rubin G.M."/>
            <person name="Celniker S.E."/>
        </authorList>
    </citation>
    <scope>NUCLEOTIDE SEQUENCE [LARGE SCALE MRNA]</scope>
    <source>
        <strain evidence="7">Berkeley</strain>
        <tissue evidence="4">Embryo</tissue>
    </source>
</reference>
<reference evidence="6" key="4">
    <citation type="journal article" date="2009" name="Genetics">
        <title>A proximal centriole-like structure is present in Drosophila spermatids and can serve as a model to study centriole duplication.</title>
        <authorList>
            <person name="Blachon S."/>
            <person name="Cai X."/>
            <person name="Roberts K.A."/>
            <person name="Yang K."/>
            <person name="Polyanovsky A."/>
            <person name="Church A."/>
            <person name="Avidor-Reiss T."/>
        </authorList>
    </citation>
    <scope>FUNCTION</scope>
</reference>
<protein>
    <recommendedName>
        <fullName>POC1 centriolar protein homolog</fullName>
    </recommendedName>
    <alternativeName>
        <fullName>Proteome of centrioles 1</fullName>
    </alternativeName>
</protein>
<accession>Q9VU65</accession>